<gene>
    <name type="primary">Nudt19</name>
    <name type="synonym">D7Rp2e</name>
</gene>
<accession>P11930</accession>
<accession>B2RS21</accession>
<keyword id="KW-0378">Hydrolase</keyword>
<keyword id="KW-0460">Magnesium</keyword>
<keyword id="KW-0464">Manganese</keyword>
<keyword id="KW-0479">Metal-binding</keyword>
<keyword id="KW-0576">Peroxisome</keyword>
<keyword id="KW-1185">Reference proteome</keyword>
<proteinExistence type="evidence at protein level"/>
<reference key="1">
    <citation type="journal article" date="1986" name="Nucleic Acids Res.">
        <title>Amino acid sequence of the testosterone-regulated mouse kidney RP2 protein deduced from its complementary DNA sequence.</title>
        <authorList>
            <person name="King D."/>
            <person name="Sun Y.H."/>
            <person name="Lingrel J.B."/>
        </authorList>
    </citation>
    <scope>NUCLEOTIDE SEQUENCE [MRNA]</scope>
    <scope>INDUCTION</scope>
    <source>
        <strain>DBA/LIHA</strain>
        <tissue>Kidney</tissue>
    </source>
</reference>
<reference key="2">
    <citation type="journal article" date="2004" name="Genome Res.">
        <title>The status, quality, and expansion of the NIH full-length cDNA project: the Mammalian Gene Collection (MGC).</title>
        <authorList>
            <consortium name="The MGC Project Team"/>
        </authorList>
    </citation>
    <scope>NUCLEOTIDE SEQUENCE [LARGE SCALE MRNA]</scope>
    <source>
        <tissue>Brain</tissue>
    </source>
</reference>
<reference key="3">
    <citation type="journal article" date="2006" name="Biochem. J.">
        <title>Proteomic analysis of mouse kidney peroxisomes: identification of RP2p as a peroxisomal nudix hydrolase with acyl-CoA diphosphatase activity.</title>
        <authorList>
            <person name="Ofman R."/>
            <person name="Speijer D."/>
            <person name="Leen R."/>
            <person name="Wanders R.J.A."/>
        </authorList>
    </citation>
    <scope>IDENTIFICATION BY MASS SPECTROMETRY</scope>
    <scope>FUNCTION</scope>
    <scope>BIOPHYSICOCHEMICAL PROPERTIES</scope>
    <scope>COFACTOR</scope>
    <scope>SUBCELLULAR LOCATION</scope>
    <scope>CATALYTIC ACTIVITY</scope>
    <scope>ACTIVITY REGULATION</scope>
</reference>
<reference key="4">
    <citation type="journal article" date="2010" name="Cell">
        <title>A tissue-specific atlas of mouse protein phosphorylation and expression.</title>
        <authorList>
            <person name="Huttlin E.L."/>
            <person name="Jedrychowski M.P."/>
            <person name="Elias J.E."/>
            <person name="Goswami T."/>
            <person name="Rad R."/>
            <person name="Beausoleil S.A."/>
            <person name="Villen J."/>
            <person name="Haas W."/>
            <person name="Sowa M.E."/>
            <person name="Gygi S.P."/>
        </authorList>
    </citation>
    <scope>IDENTIFICATION BY MASS SPECTROMETRY [LARGE SCALE ANALYSIS]</scope>
    <source>
        <tissue>Kidney</tissue>
        <tissue>Liver</tissue>
        <tissue>Pancreas</tissue>
        <tissue>Spleen</tissue>
        <tissue>Testis</tissue>
    </source>
</reference>
<reference key="5">
    <citation type="journal article" date="2013" name="Mol. Cell">
        <title>SIRT5-mediated lysine desuccinylation impacts diverse metabolic pathways.</title>
        <authorList>
            <person name="Park J."/>
            <person name="Chen Y."/>
            <person name="Tishkoff D.X."/>
            <person name="Peng C."/>
            <person name="Tan M."/>
            <person name="Dai L."/>
            <person name="Xie Z."/>
            <person name="Zhang Y."/>
            <person name="Zwaans B.M."/>
            <person name="Skinner M.E."/>
            <person name="Lombard D.B."/>
            <person name="Zhao Y."/>
        </authorList>
    </citation>
    <scope>SUCCINYLATION [LARGE SCALE ANALYSIS] AT LYS-300</scope>
    <scope>IDENTIFICATION BY MASS SPECTROMETRY [LARGE SCALE ANALYSIS]</scope>
    <source>
        <tissue>Liver</tissue>
    </source>
</reference>
<reference key="6">
    <citation type="journal article" date="2018" name="J. Biol. Chem.">
        <title>Nudt19 is a renal CoA diphosphohydrolase with biochemical and regulatory properties that are distinct from the hepatic Nudt7 isoform.</title>
        <authorList>
            <person name="Shumar S.A."/>
            <person name="Kerr E.W."/>
            <person name="Geldenhuys W.J."/>
            <person name="Montgomery G.E."/>
            <person name="Fagone P."/>
            <person name="Thirawatananond P."/>
            <person name="Saavedra H."/>
            <person name="Gabelli S.B."/>
            <person name="Leonardi R."/>
        </authorList>
    </citation>
    <scope>FUNCTION</scope>
    <scope>CATALYTIC ACTIVITY</scope>
    <scope>TISSUE SPECIFICITY</scope>
    <scope>ACTIVITY REGULATION</scope>
    <scope>SUBUNIT</scope>
    <scope>DISRUPTION PHENOTYPE</scope>
    <scope>BIOPHYSICOCHEMICAL PROPERTIES</scope>
    <scope>SUBCELLULAR LOCATION</scope>
    <scope>COFACTOR</scope>
    <scope>COENZYME A BINDING SITES</scope>
    <scope>MAGNESIUM BINDING SITES</scope>
    <scope>MUTAGENESIS OF ARG-34; ARG-39; PHE-40; LEU-41; ASP-53; GLU-112; GLU-115; GLU-116 AND ARG-189</scope>
</reference>
<reference key="7">
    <citation type="journal article" date="2020" name="Nucleic Acids Res.">
        <title>Mammalian Nudix proteins cleave nucleotide metabolite caps on RNAs.</title>
        <authorList>
            <person name="Sharma S."/>
            <person name="Grudzien-Nogalska E."/>
            <person name="Hamilton K."/>
            <person name="Jiao X."/>
            <person name="Yang J."/>
            <person name="Tong L."/>
            <person name="Kiledjian M."/>
        </authorList>
    </citation>
    <scope>FUNCTION</scope>
    <scope>CATALYTIC ACTIVITY</scope>
</reference>
<dbReference type="EC" id="3.6.1.-"/>
<dbReference type="EC" id="3.6.1.77" evidence="4 5"/>
<dbReference type="EMBL" id="X04097">
    <property type="protein sequence ID" value="CAA27722.1"/>
    <property type="molecule type" value="mRNA"/>
</dbReference>
<dbReference type="EMBL" id="BC138674">
    <property type="protein sequence ID" value="AAI38675.1"/>
    <property type="molecule type" value="mRNA"/>
</dbReference>
<dbReference type="EMBL" id="BC138675">
    <property type="protein sequence ID" value="AAI38676.1"/>
    <property type="molecule type" value="mRNA"/>
</dbReference>
<dbReference type="CCDS" id="CCDS21152.1"/>
<dbReference type="PIR" id="A23641">
    <property type="entry name" value="A23641"/>
</dbReference>
<dbReference type="RefSeq" id="NP_149071.2">
    <property type="nucleotide sequence ID" value="NM_033080.2"/>
</dbReference>
<dbReference type="SMR" id="P11930"/>
<dbReference type="BioGRID" id="226054">
    <property type="interactions" value="3"/>
</dbReference>
<dbReference type="FunCoup" id="P11930">
    <property type="interactions" value="1002"/>
</dbReference>
<dbReference type="IntAct" id="P11930">
    <property type="interactions" value="2"/>
</dbReference>
<dbReference type="MINT" id="P11930"/>
<dbReference type="STRING" id="10090.ENSMUSP00000047778"/>
<dbReference type="iPTMnet" id="P11930"/>
<dbReference type="PhosphoSitePlus" id="P11930"/>
<dbReference type="SwissPalm" id="P11930"/>
<dbReference type="jPOST" id="P11930"/>
<dbReference type="PaxDb" id="10090-ENSMUSP00000047778"/>
<dbReference type="PeptideAtlas" id="P11930"/>
<dbReference type="ProteomicsDB" id="293779"/>
<dbReference type="Pumba" id="P11930"/>
<dbReference type="Antibodypedia" id="44300">
    <property type="antibodies" value="100 antibodies from 20 providers"/>
</dbReference>
<dbReference type="Ensembl" id="ENSMUST00000040962.6">
    <property type="protein sequence ID" value="ENSMUSP00000047778.6"/>
    <property type="gene ID" value="ENSMUSG00000034875.6"/>
</dbReference>
<dbReference type="GeneID" id="110959"/>
<dbReference type="KEGG" id="mmu:110959"/>
<dbReference type="UCSC" id="uc009gka.1">
    <property type="organism name" value="mouse"/>
</dbReference>
<dbReference type="AGR" id="MGI:94203"/>
<dbReference type="CTD" id="390916"/>
<dbReference type="MGI" id="MGI:94203">
    <property type="gene designation" value="Nudt19"/>
</dbReference>
<dbReference type="VEuPathDB" id="HostDB:ENSMUSG00000034875"/>
<dbReference type="eggNOG" id="KOG3904">
    <property type="taxonomic scope" value="Eukaryota"/>
</dbReference>
<dbReference type="GeneTree" id="ENSGT00420000029858"/>
<dbReference type="HOGENOM" id="CLU_059078_1_0_1"/>
<dbReference type="InParanoid" id="P11930"/>
<dbReference type="OMA" id="GFMPSAH"/>
<dbReference type="OrthoDB" id="1695362at2759"/>
<dbReference type="PhylomeDB" id="P11930"/>
<dbReference type="TreeFam" id="TF313185"/>
<dbReference type="Reactome" id="R-MMU-390918">
    <property type="pathway name" value="Peroxisomal lipid metabolism"/>
</dbReference>
<dbReference type="Reactome" id="R-MMU-9033241">
    <property type="pathway name" value="Peroxisomal protein import"/>
</dbReference>
<dbReference type="BioGRID-ORCS" id="110959">
    <property type="hits" value="5 hits in 82 CRISPR screens"/>
</dbReference>
<dbReference type="ChiTaRS" id="Nudt19">
    <property type="organism name" value="mouse"/>
</dbReference>
<dbReference type="PRO" id="PR:P11930"/>
<dbReference type="Proteomes" id="UP000000589">
    <property type="component" value="Chromosome 7"/>
</dbReference>
<dbReference type="RNAct" id="P11930">
    <property type="molecule type" value="protein"/>
</dbReference>
<dbReference type="Bgee" id="ENSMUSG00000034875">
    <property type="expression patterns" value="Expressed in right kidney and 263 other cell types or tissues"/>
</dbReference>
<dbReference type="GO" id="GO:0005739">
    <property type="term" value="C:mitochondrion"/>
    <property type="evidence" value="ECO:0007005"/>
    <property type="project" value="MGI"/>
</dbReference>
<dbReference type="GO" id="GO:0005777">
    <property type="term" value="C:peroxisome"/>
    <property type="evidence" value="ECO:0007669"/>
    <property type="project" value="UniProtKB-SubCell"/>
</dbReference>
<dbReference type="GO" id="GO:0010945">
    <property type="term" value="F:coenzyme A diphosphatase activity"/>
    <property type="evidence" value="ECO:0007669"/>
    <property type="project" value="RHEA"/>
</dbReference>
<dbReference type="GO" id="GO:0000287">
    <property type="term" value="F:magnesium ion binding"/>
    <property type="evidence" value="ECO:0000314"/>
    <property type="project" value="UniProtKB"/>
</dbReference>
<dbReference type="GO" id="GO:0044580">
    <property type="term" value="P:butyryl-CoA catabolic process"/>
    <property type="evidence" value="ECO:0000314"/>
    <property type="project" value="UniProtKB"/>
</dbReference>
<dbReference type="GO" id="GO:0015938">
    <property type="term" value="P:coenzyme A catabolic process"/>
    <property type="evidence" value="ECO:0000314"/>
    <property type="project" value="UniProtKB"/>
</dbReference>
<dbReference type="GO" id="GO:2001294">
    <property type="term" value="P:malonyl-CoA catabolic process"/>
    <property type="evidence" value="ECO:0000314"/>
    <property type="project" value="UniProtKB"/>
</dbReference>
<dbReference type="GO" id="GO:0036114">
    <property type="term" value="P:medium-chain fatty-acyl-CoA catabolic process"/>
    <property type="evidence" value="ECO:0000314"/>
    <property type="project" value="UniProtKB"/>
</dbReference>
<dbReference type="GO" id="GO:1902858">
    <property type="term" value="P:propionyl-CoA metabolic process"/>
    <property type="evidence" value="ECO:0000314"/>
    <property type="project" value="UniProtKB"/>
</dbReference>
<dbReference type="GO" id="GO:1901289">
    <property type="term" value="P:succinyl-CoA catabolic process"/>
    <property type="evidence" value="ECO:0000314"/>
    <property type="project" value="UniProtKB"/>
</dbReference>
<dbReference type="CDD" id="cd18870">
    <property type="entry name" value="NUDIX_AcylCoAdiphos_Nudt19"/>
    <property type="match status" value="1"/>
</dbReference>
<dbReference type="FunFam" id="3.90.79.10:FF:000072">
    <property type="entry name" value="Nucleoside diphosphate-linked moiety X motif 19"/>
    <property type="match status" value="1"/>
</dbReference>
<dbReference type="Gene3D" id="3.90.79.10">
    <property type="entry name" value="Nucleoside Triphosphate Pyrophosphohydrolase"/>
    <property type="match status" value="1"/>
</dbReference>
<dbReference type="InterPro" id="IPR015797">
    <property type="entry name" value="NUDIX_hydrolase-like_dom_sf"/>
</dbReference>
<dbReference type="InterPro" id="IPR000086">
    <property type="entry name" value="NUDIX_hydrolase_dom"/>
</dbReference>
<dbReference type="InterPro" id="IPR039121">
    <property type="entry name" value="NUDT19"/>
</dbReference>
<dbReference type="PANTHER" id="PTHR12318:SF0">
    <property type="entry name" value="ACYL-COENZYME A DIPHOSPHATASE NUDT19"/>
    <property type="match status" value="1"/>
</dbReference>
<dbReference type="PANTHER" id="PTHR12318">
    <property type="entry name" value="TESTOSTERONE-REGULATED PROTEIN RP2"/>
    <property type="match status" value="1"/>
</dbReference>
<dbReference type="SUPFAM" id="SSF55811">
    <property type="entry name" value="Nudix"/>
    <property type="match status" value="1"/>
</dbReference>
<dbReference type="PROSITE" id="PS51462">
    <property type="entry name" value="NUDIX"/>
    <property type="match status" value="1"/>
</dbReference>
<sequence length="357" mass="40320">MSSSSSWRRAATVMLAAGWTHSSPAGFRLLLLQRAQNQRFLPGAHVFPGGVLDAADSSPDWVRLFAPRHTPPRFGLGPEPPRQPPFPGLSHGDADPAALPDDVALRICAIREAFEEAGVLLLRPRDAAPASQEPSQALSPPAGLAEWRSRVRSDPRCFLQLCAHLDCTPDIWALHDWGGWLTPYGRTIRRFDTTFFLCCLRDIPRVEPDVAEVVGYQWLSPSEATECFLSKEIWLAPPQFYEMRRLENFASLSALYRFCSDRPSEVPEKWLPIILLTSDGTIHLLPGDELYVKDSDFLEKNMSTDKKTEEIVKEGKVLNRVVIHSPYVYEIYMTLPSENKHVYPRNYIVNKRCTAHL</sequence>
<comment type="function">
    <text evidence="4 5 6">Fatty acyl-coenzyme A (CoA) diphosphatase that hydrolyzes fatty acyl-CoA to yield acyl-4'-phosphopantetheine and adenosine 3',5'-bisphosphate (PubMed:16185196, PubMed:29378847). Mediates the hydrolysis of a wide range of CoA esters, including choloyl-CoA and branched-chain fatty-acyl-CoA esters and at low substrate concentrations medium and long-chain fatty-acyl-CoA esters are the primary substrates (PubMed:16185196, PubMed:29378847). Highest activity seen with medium-chain acyl-CoA esters and higher rates of activity seen with the unsaturated acyl-CoA esters compared with the saturated esters (PubMed:16185196). Exhibits decapping activity towards dpCoA-capped RNAs in vitro (PubMed:32432673).</text>
</comment>
<comment type="catalytic activity">
    <reaction evidence="4 5">
        <text>an acyl-CoA + H2O = an acyl-4'-phosphopantetheine + adenosine 3',5'-bisphosphate + 2 H(+)</text>
        <dbReference type="Rhea" id="RHEA:50044"/>
        <dbReference type="ChEBI" id="CHEBI:15377"/>
        <dbReference type="ChEBI" id="CHEBI:15378"/>
        <dbReference type="ChEBI" id="CHEBI:58342"/>
        <dbReference type="ChEBI" id="CHEBI:58343"/>
        <dbReference type="ChEBI" id="CHEBI:132023"/>
    </reaction>
    <physiologicalReaction direction="left-to-right" evidence="10">
        <dbReference type="Rhea" id="RHEA:50045"/>
    </physiologicalReaction>
</comment>
<comment type="catalytic activity">
    <reaction evidence="4 5">
        <text>CoA + H2O = (R)-4'-phosphopantetheine + adenosine 3',5'-bisphosphate + 2 H(+)</text>
        <dbReference type="Rhea" id="RHEA:64988"/>
        <dbReference type="ChEBI" id="CHEBI:15377"/>
        <dbReference type="ChEBI" id="CHEBI:15378"/>
        <dbReference type="ChEBI" id="CHEBI:57287"/>
        <dbReference type="ChEBI" id="CHEBI:58343"/>
        <dbReference type="ChEBI" id="CHEBI:61723"/>
        <dbReference type="EC" id="3.6.1.77"/>
    </reaction>
    <physiologicalReaction direction="left-to-right" evidence="10">
        <dbReference type="Rhea" id="RHEA:64989"/>
    </physiologicalReaction>
</comment>
<comment type="catalytic activity">
    <reaction evidence="5">
        <text>hexanoyl-CoA + H2O = hexanoyl-4'-phosphopantetheine + adenosine 3',5'-bisphosphate + 2 H(+)</text>
        <dbReference type="Rhea" id="RHEA:49980"/>
        <dbReference type="ChEBI" id="CHEBI:15377"/>
        <dbReference type="ChEBI" id="CHEBI:15378"/>
        <dbReference type="ChEBI" id="CHEBI:58343"/>
        <dbReference type="ChEBI" id="CHEBI:62620"/>
        <dbReference type="ChEBI" id="CHEBI:132012"/>
    </reaction>
    <physiologicalReaction direction="left-to-right" evidence="11">
        <dbReference type="Rhea" id="RHEA:49981"/>
    </physiologicalReaction>
</comment>
<comment type="catalytic activity">
    <reaction evidence="4">
        <text>octanoyl-CoA + H2O = S-octanoyl-4'-phosphopantetheine + adenosine 3',5'-bisphosphate + 2 H(+)</text>
        <dbReference type="Rhea" id="RHEA:50016"/>
        <dbReference type="ChEBI" id="CHEBI:15377"/>
        <dbReference type="ChEBI" id="CHEBI:15378"/>
        <dbReference type="ChEBI" id="CHEBI:57386"/>
        <dbReference type="ChEBI" id="CHEBI:58343"/>
        <dbReference type="ChEBI" id="CHEBI:132013"/>
    </reaction>
    <physiologicalReaction direction="left-to-right" evidence="10">
        <dbReference type="Rhea" id="RHEA:50017"/>
    </physiologicalReaction>
</comment>
<comment type="catalytic activity">
    <reaction evidence="5">
        <text>butanoyl-CoA + H2O = S-butanoyl-4'-phosphopantetheine + adenosine 3',5'-bisphosphate + 2 H(+)</text>
        <dbReference type="Rhea" id="RHEA:49976"/>
        <dbReference type="ChEBI" id="CHEBI:15377"/>
        <dbReference type="ChEBI" id="CHEBI:15378"/>
        <dbReference type="ChEBI" id="CHEBI:57371"/>
        <dbReference type="ChEBI" id="CHEBI:58343"/>
        <dbReference type="ChEBI" id="CHEBI:132011"/>
    </reaction>
    <physiologicalReaction direction="left-to-right" evidence="11">
        <dbReference type="Rhea" id="RHEA:49977"/>
    </physiologicalReaction>
</comment>
<comment type="catalytic activity">
    <reaction evidence="5">
        <text>propanoyl-CoA + H2O = propanoyl-4'-phosphopantetheine + adenosine 3',5'-bisphosphate + 2 H(+)</text>
        <dbReference type="Rhea" id="RHEA:67464"/>
        <dbReference type="ChEBI" id="CHEBI:15377"/>
        <dbReference type="ChEBI" id="CHEBI:15378"/>
        <dbReference type="ChEBI" id="CHEBI:57392"/>
        <dbReference type="ChEBI" id="CHEBI:58343"/>
        <dbReference type="ChEBI" id="CHEBI:172362"/>
    </reaction>
    <physiologicalReaction direction="left-to-right" evidence="11">
        <dbReference type="Rhea" id="RHEA:67465"/>
    </physiologicalReaction>
</comment>
<comment type="catalytic activity">
    <reaction evidence="5">
        <text>malonyl-CoA + H2O = malonyl-4'-phosphopantetheine + adenosine 3',5'-bisphosphate + 2 H(+)</text>
        <dbReference type="Rhea" id="RHEA:67468"/>
        <dbReference type="ChEBI" id="CHEBI:15377"/>
        <dbReference type="ChEBI" id="CHEBI:15378"/>
        <dbReference type="ChEBI" id="CHEBI:57384"/>
        <dbReference type="ChEBI" id="CHEBI:58343"/>
        <dbReference type="ChEBI" id="CHEBI:172363"/>
    </reaction>
    <physiologicalReaction direction="left-to-right" evidence="11">
        <dbReference type="Rhea" id="RHEA:67469"/>
    </physiologicalReaction>
</comment>
<comment type="catalytic activity">
    <reaction evidence="5">
        <text>succinyl-CoA + H2O = succinyl-4'-phosphopantetheine + adenosine 3',5'-bisphosphate + 2 H(+)</text>
        <dbReference type="Rhea" id="RHEA:67472"/>
        <dbReference type="ChEBI" id="CHEBI:15377"/>
        <dbReference type="ChEBI" id="CHEBI:15378"/>
        <dbReference type="ChEBI" id="CHEBI:57292"/>
        <dbReference type="ChEBI" id="CHEBI:58343"/>
        <dbReference type="ChEBI" id="CHEBI:172364"/>
    </reaction>
    <physiologicalReaction direction="left-to-right" evidence="11">
        <dbReference type="Rhea" id="RHEA:67473"/>
    </physiologicalReaction>
</comment>
<comment type="catalytic activity">
    <reaction evidence="4">
        <text>choloyl-CoA + H2O = S-choloyl-4'-phosphopantetheine + adenosine 3',5'-bisphosphate + 2 H(+)</text>
        <dbReference type="Rhea" id="RHEA:50036"/>
        <dbReference type="ChEBI" id="CHEBI:15377"/>
        <dbReference type="ChEBI" id="CHEBI:15378"/>
        <dbReference type="ChEBI" id="CHEBI:57373"/>
        <dbReference type="ChEBI" id="CHEBI:58343"/>
        <dbReference type="ChEBI" id="CHEBI:132020"/>
    </reaction>
    <physiologicalReaction direction="left-to-right" evidence="10">
        <dbReference type="Rhea" id="RHEA:50037"/>
    </physiologicalReaction>
</comment>
<comment type="catalytic activity">
    <reaction evidence="4">
        <text>4,8-dimethylnonanoyl-CoA + H2O = S-(4,8-dimethylnonanoyl)-4'-phosphopantetheine + adenosine 3',5'-bisphosphate + 2 H(+)</text>
        <dbReference type="Rhea" id="RHEA:67524"/>
        <dbReference type="ChEBI" id="CHEBI:15377"/>
        <dbReference type="ChEBI" id="CHEBI:15378"/>
        <dbReference type="ChEBI" id="CHEBI:58343"/>
        <dbReference type="ChEBI" id="CHEBI:77061"/>
        <dbReference type="ChEBI" id="CHEBI:172385"/>
    </reaction>
    <physiologicalReaction direction="left-to-right" evidence="10">
        <dbReference type="Rhea" id="RHEA:67525"/>
    </physiologicalReaction>
</comment>
<comment type="catalytic activity">
    <reaction evidence="4">
        <text>(9Z,12Z,15Z)-octadecatrienoyl-CoA + H2O = S-(9Z,12Z,15Z-octadecatrienoyl)-4'-phosphopantetheine + adenosine 3',5'-bisphosphate + 2 H(+)</text>
        <dbReference type="Rhea" id="RHEA:67532"/>
        <dbReference type="ChEBI" id="CHEBI:15377"/>
        <dbReference type="ChEBI" id="CHEBI:15378"/>
        <dbReference type="ChEBI" id="CHEBI:58343"/>
        <dbReference type="ChEBI" id="CHEBI:74034"/>
        <dbReference type="ChEBI" id="CHEBI:172386"/>
    </reaction>
    <physiologicalReaction direction="left-to-right" evidence="10">
        <dbReference type="Rhea" id="RHEA:67533"/>
    </physiologicalReaction>
</comment>
<comment type="catalytic activity">
    <reaction evidence="4">
        <text>(9Z,12Z)-octadecadienoyl-CoA + H2O = S-(9Z,12Z-octadecadienoyl)-4'-phosphopantetheine + adenosine 3',5'-bisphosphate + 2 H(+)</text>
        <dbReference type="Rhea" id="RHEA:67536"/>
        <dbReference type="ChEBI" id="CHEBI:15377"/>
        <dbReference type="ChEBI" id="CHEBI:15378"/>
        <dbReference type="ChEBI" id="CHEBI:57383"/>
        <dbReference type="ChEBI" id="CHEBI:58343"/>
        <dbReference type="ChEBI" id="CHEBI:172387"/>
    </reaction>
    <physiologicalReaction direction="left-to-right" evidence="10">
        <dbReference type="Rhea" id="RHEA:67537"/>
    </physiologicalReaction>
</comment>
<comment type="catalytic activity">
    <reaction evidence="4">
        <text>(9Z)-hexadecenoyl-CoA + H2O = S-(9Z-hexadecenoyl)-4'-phosphopantetheine + adenosine 3',5'-bisphosphate + 2 H(+)</text>
        <dbReference type="Rhea" id="RHEA:67540"/>
        <dbReference type="ChEBI" id="CHEBI:15377"/>
        <dbReference type="ChEBI" id="CHEBI:15378"/>
        <dbReference type="ChEBI" id="CHEBI:58343"/>
        <dbReference type="ChEBI" id="CHEBI:61540"/>
        <dbReference type="ChEBI" id="CHEBI:172388"/>
    </reaction>
    <physiologicalReaction direction="left-to-right" evidence="10">
        <dbReference type="Rhea" id="RHEA:67541"/>
    </physiologicalReaction>
</comment>
<comment type="catalytic activity">
    <reaction evidence="4">
        <text>(9Z)-tetradecenoyl-CoA + H2O = S-(9Z-tetradecenoyl)-4'-phosphopantetheine + adenosine 3',5'-bisphosphate + 2 H(+)</text>
        <dbReference type="Rhea" id="RHEA:67544"/>
        <dbReference type="ChEBI" id="CHEBI:15377"/>
        <dbReference type="ChEBI" id="CHEBI:15378"/>
        <dbReference type="ChEBI" id="CHEBI:58343"/>
        <dbReference type="ChEBI" id="CHEBI:65060"/>
        <dbReference type="ChEBI" id="CHEBI:172389"/>
    </reaction>
    <physiologicalReaction direction="left-to-right" evidence="10">
        <dbReference type="Rhea" id="RHEA:67545"/>
    </physiologicalReaction>
</comment>
<comment type="catalytic activity">
    <reaction evidence="4">
        <text>(6Z)-octenoyl-CoA + H2O = S-(6Z-octenoyl)-4'-phosphopantetheine + adenosine 3',5'-bisphosphate + 2 H(+)</text>
        <dbReference type="Rhea" id="RHEA:67528"/>
        <dbReference type="ChEBI" id="CHEBI:15377"/>
        <dbReference type="ChEBI" id="CHEBI:15378"/>
        <dbReference type="ChEBI" id="CHEBI:58343"/>
        <dbReference type="ChEBI" id="CHEBI:172383"/>
        <dbReference type="ChEBI" id="CHEBI:172384"/>
    </reaction>
    <physiologicalReaction direction="left-to-right" evidence="10">
        <dbReference type="Rhea" id="RHEA:67529"/>
    </physiologicalReaction>
</comment>
<comment type="catalytic activity">
    <reaction evidence="4">
        <text>hexadecanoyl-CoA + H2O = S-hexadecanoyl-4'-phosphopantetheine + adenosine 3',5'-bisphosphate + 2 H(+)</text>
        <dbReference type="Rhea" id="RHEA:50032"/>
        <dbReference type="ChEBI" id="CHEBI:15377"/>
        <dbReference type="ChEBI" id="CHEBI:15378"/>
        <dbReference type="ChEBI" id="CHEBI:57379"/>
        <dbReference type="ChEBI" id="CHEBI:58343"/>
        <dbReference type="ChEBI" id="CHEBI:132018"/>
    </reaction>
    <physiologicalReaction direction="left-to-right" evidence="10">
        <dbReference type="Rhea" id="RHEA:50033"/>
    </physiologicalReaction>
</comment>
<comment type="catalytic activity">
    <reaction evidence="4">
        <text>tetradecanoyl-CoA + H2O = tetradecanoyl-4'-phosphopantetheine + adenosine 3',5'-bisphosphate + 2 H(+)</text>
        <dbReference type="Rhea" id="RHEA:50028"/>
        <dbReference type="ChEBI" id="CHEBI:15377"/>
        <dbReference type="ChEBI" id="CHEBI:15378"/>
        <dbReference type="ChEBI" id="CHEBI:57385"/>
        <dbReference type="ChEBI" id="CHEBI:58343"/>
        <dbReference type="ChEBI" id="CHEBI:132017"/>
    </reaction>
    <physiologicalReaction direction="left-to-right" evidence="10">
        <dbReference type="Rhea" id="RHEA:50029"/>
    </physiologicalReaction>
</comment>
<comment type="catalytic activity">
    <reaction evidence="4">
        <text>dodecanoyl-CoA + H2O = S-dodecanoyl-4'-phosphopantetheine + adenosine 3',5'-bisphosphate + 2 H(+)</text>
        <dbReference type="Rhea" id="RHEA:50024"/>
        <dbReference type="ChEBI" id="CHEBI:15377"/>
        <dbReference type="ChEBI" id="CHEBI:15378"/>
        <dbReference type="ChEBI" id="CHEBI:57375"/>
        <dbReference type="ChEBI" id="CHEBI:58343"/>
        <dbReference type="ChEBI" id="CHEBI:132015"/>
    </reaction>
    <physiologicalReaction direction="left-to-right" evidence="10">
        <dbReference type="Rhea" id="RHEA:50025"/>
    </physiologicalReaction>
</comment>
<comment type="catalytic activity">
    <reaction evidence="12">
        <text>a 5'-end CoA-ribonucleoside in mRNA + H2O = a 5'-end phospho-adenosine-phospho-ribonucleoside in mRNA + (R)-4'-phosphopantetheine + 2 H(+)</text>
        <dbReference type="Rhea" id="RHEA:67592"/>
        <dbReference type="Rhea" id="RHEA-COMP:15719"/>
        <dbReference type="Rhea" id="RHEA-COMP:17276"/>
        <dbReference type="ChEBI" id="CHEBI:15377"/>
        <dbReference type="ChEBI" id="CHEBI:15378"/>
        <dbReference type="ChEBI" id="CHEBI:61723"/>
        <dbReference type="ChEBI" id="CHEBI:144051"/>
        <dbReference type="ChEBI" id="CHEBI:172371"/>
    </reaction>
    <physiologicalReaction direction="left-to-right" evidence="12">
        <dbReference type="Rhea" id="RHEA:67593"/>
    </physiologicalReaction>
</comment>
<comment type="cofactor">
    <cofactor evidence="4 5">
        <name>Mg(2+)</name>
        <dbReference type="ChEBI" id="CHEBI:18420"/>
    </cofactor>
    <cofactor evidence="4">
        <name>Mn(2+)</name>
        <dbReference type="ChEBI" id="CHEBI:29035"/>
    </cofactor>
</comment>
<comment type="activity regulation">
    <text evidence="4 5">Inhibited by chenodeoxycholic acid (CDCA) and its conjugated derivatives, taurochenodeoxycholic acid and glycochenodeoxycholic acid (PubMed:29378847). Inhibited by fluoride (PubMed:16185196).</text>
</comment>
<comment type="biophysicochemical properties">
    <kinetics>
        <KM evidence="4">0.6 mM for CoA</KM>
        <KM evidence="4">0.58 mM for oxidized CoA</KM>
        <KM evidence="4">0.08 mM for lauroyl-CoA</KM>
        <KM evidence="4">0.01 mM for palmitoyl-CoA</KM>
        <KM evidence="4">0.1 mM for choloyl-CoA</KM>
        <KM evidence="4">0.1 mM for pristanoyl-CoA</KM>
        <KM evidence="5">300 uM for CoA</KM>
        <Vmax evidence="4">0.56 umol/min/mg enzyme with CoA as substrate</Vmax>
        <Vmax evidence="4">0.012 umol/min/mg enzyme with oxidized CoA as substrate</Vmax>
        <Vmax evidence="4">0.2 umol/min/mg enzyme with lauroyl-CoA as substrate</Vmax>
        <Vmax evidence="4">0.013 umol/min/mg enzyme with palmitoyl-CoA as substrate</Vmax>
        <Vmax evidence="4">0.17 umol/min/mg enzyme with choloyl-CoA as substrate</Vmax>
        <Vmax evidence="4">0.009 umol/min/mg enzyme with pristanoyl-CoA as substrate</Vmax>
    </kinetics>
    <phDependence>
        <text evidence="4">Optimum pH is 9.0.</text>
    </phDependence>
</comment>
<comment type="subunit">
    <text evidence="5">Monomer.</text>
</comment>
<comment type="subcellular location">
    <subcellularLocation>
        <location evidence="4 5">Peroxisome</location>
    </subcellularLocation>
</comment>
<comment type="tissue specificity">
    <text evidence="5">Highly expressed in the kidneys, with lower levels in skeletal muscle and brain (at protein level).</text>
</comment>
<comment type="induction">
    <text evidence="7">By testosterone.</text>
</comment>
<comment type="disruption phenotype">
    <text evidence="5">Mice exhibit a significant 20% increase in total CoA levels in kidney.</text>
</comment>
<comment type="similarity">
    <text evidence="9">Belongs to the Nudix hydrolase family.</text>
</comment>
<feature type="chain" id="PRO_0000057119" description="Acyl-coenzyme A diphosphatase NUDT19">
    <location>
        <begin position="1"/>
        <end position="357"/>
    </location>
</feature>
<feature type="domain" description="Nudix hydrolase" evidence="2">
    <location>
        <begin position="10"/>
        <end position="242"/>
    </location>
</feature>
<feature type="region of interest" description="Disordered" evidence="3">
    <location>
        <begin position="72"/>
        <end position="93"/>
    </location>
</feature>
<feature type="short sequence motif" description="Nudix box">
    <location>
        <begin position="97"/>
        <end position="118"/>
    </location>
</feature>
<feature type="short sequence motif" description="Microbody targeting signal" evidence="1">
    <location>
        <begin position="355"/>
        <end position="357"/>
    </location>
</feature>
<feature type="compositionally biased region" description="Pro residues" evidence="3">
    <location>
        <begin position="78"/>
        <end position="87"/>
    </location>
</feature>
<feature type="binding site" evidence="11">
    <location>
        <position position="112"/>
    </location>
    <ligand>
        <name>Mg(2+)</name>
        <dbReference type="ChEBI" id="CHEBI:18420"/>
    </ligand>
</feature>
<feature type="binding site" evidence="11">
    <location>
        <position position="116"/>
    </location>
    <ligand>
        <name>Mg(2+)</name>
        <dbReference type="ChEBI" id="CHEBI:18420"/>
    </ligand>
</feature>
<feature type="site" description="Important for coenzyme A binding" evidence="5">
    <location>
        <position position="34"/>
    </location>
</feature>
<feature type="site" description="Important for coenzyme A binding" evidence="5">
    <location>
        <position position="40"/>
    </location>
</feature>
<feature type="site" description="Important for coenzyme A binding" evidence="5">
    <location>
        <position position="41"/>
    </location>
</feature>
<feature type="site" description="Important for coenzyme A binding" evidence="5">
    <location>
        <position position="189"/>
    </location>
</feature>
<feature type="modified residue" description="N6-succinyllysine" evidence="13">
    <location>
        <position position="300"/>
    </location>
</feature>
<feature type="mutagenesis site" description="2-fold increase in Km for CoA. Reduced affinity for CoA." evidence="5">
    <original>R</original>
    <variation>M</variation>
    <location>
        <position position="34"/>
    </location>
</feature>
<feature type="mutagenesis site" description="No significant effect on Km for CoA." evidence="5">
    <original>R</original>
    <variation>A</variation>
    <location>
        <position position="39"/>
    </location>
</feature>
<feature type="mutagenesis site" description="3- to 4-fold increase in Km for CoA. Reduced affinity for CoA." evidence="5">
    <original>F</original>
    <variation>A</variation>
    <location>
        <position position="40"/>
    </location>
</feature>
<feature type="mutagenesis site" description="3- to 4-fold increase in Km for CoA. Reduced affinity for CoA." evidence="5">
    <original>L</original>
    <variation>A</variation>
    <location>
        <position position="41"/>
    </location>
</feature>
<feature type="mutagenesis site" description="No significant effect on Km for CoA." evidence="5">
    <original>D</original>
    <variation>A</variation>
    <location>
        <position position="53"/>
    </location>
</feature>
<feature type="mutagenesis site" description="Loss of fatty acyl-coenzyme A diphosphatase activity." evidence="5">
    <original>E</original>
    <variation>A</variation>
    <location>
        <position position="112"/>
    </location>
</feature>
<feature type="mutagenesis site" description="3-fold increase in Km for CoA." evidence="5">
    <original>E</original>
    <variation>A</variation>
    <location>
        <position position="115"/>
    </location>
</feature>
<feature type="mutagenesis site" description="Loss of fatty acyl-coenzyme A diphosphatase activity." evidence="5">
    <original>E</original>
    <variation>A</variation>
    <location>
        <position position="116"/>
    </location>
</feature>
<feature type="mutagenesis site" description="4-fold increase in Km for CoA. Reduced affinity for CoA." evidence="5">
    <original>R</original>
    <variation>A</variation>
    <location>
        <position position="189"/>
    </location>
</feature>
<feature type="mutagenesis site" description="No significant effect on Km for CoA." evidence="5">
    <original>R</original>
    <variation>M</variation>
    <location>
        <position position="189"/>
    </location>
</feature>
<feature type="sequence conflict" description="In Ref. 1; CAA27722." evidence="9" ref="1">
    <original>I</original>
    <variation>T</variation>
    <location>
        <position position="203"/>
    </location>
</feature>
<feature type="sequence conflict" description="In Ref. 1; CAA27722." evidence="9" ref="1">
    <original>C</original>
    <variation>Y</variation>
    <location>
        <position position="353"/>
    </location>
</feature>
<protein>
    <recommendedName>
        <fullName evidence="8">Acyl-coenzyme A diphosphatase NUDT19</fullName>
        <ecNumber>3.6.1.-</ecNumber>
        <ecNumber evidence="4 5">3.6.1.77</ecNumber>
    </recommendedName>
    <alternativeName>
        <fullName>Androgen-regulated protein RP2</fullName>
    </alternativeName>
    <alternativeName>
        <fullName>Nucleoside diphosphate-linked moiety X motif 19</fullName>
        <shortName>Nudix motif 19</shortName>
    </alternativeName>
    <alternativeName>
        <fullName evidence="8">Renal CoA diphosphohydrolase</fullName>
    </alternativeName>
    <alternativeName>
        <fullName>Testosterone-regulated RP2 protein</fullName>
        <shortName>RP2p</shortName>
    </alternativeName>
</protein>
<organism>
    <name type="scientific">Mus musculus</name>
    <name type="common">Mouse</name>
    <dbReference type="NCBI Taxonomy" id="10090"/>
    <lineage>
        <taxon>Eukaryota</taxon>
        <taxon>Metazoa</taxon>
        <taxon>Chordata</taxon>
        <taxon>Craniata</taxon>
        <taxon>Vertebrata</taxon>
        <taxon>Euteleostomi</taxon>
        <taxon>Mammalia</taxon>
        <taxon>Eutheria</taxon>
        <taxon>Euarchontoglires</taxon>
        <taxon>Glires</taxon>
        <taxon>Rodentia</taxon>
        <taxon>Myomorpha</taxon>
        <taxon>Muroidea</taxon>
        <taxon>Muridae</taxon>
        <taxon>Murinae</taxon>
        <taxon>Mus</taxon>
        <taxon>Mus</taxon>
    </lineage>
</organism>
<name>NUD19_MOUSE</name>
<evidence type="ECO:0000255" key="1"/>
<evidence type="ECO:0000255" key="2">
    <source>
        <dbReference type="PROSITE-ProRule" id="PRU00794"/>
    </source>
</evidence>
<evidence type="ECO:0000256" key="3">
    <source>
        <dbReference type="SAM" id="MobiDB-lite"/>
    </source>
</evidence>
<evidence type="ECO:0000269" key="4">
    <source>
    </source>
</evidence>
<evidence type="ECO:0000269" key="5">
    <source>
    </source>
</evidence>
<evidence type="ECO:0000269" key="6">
    <source>
    </source>
</evidence>
<evidence type="ECO:0000269" key="7">
    <source>
    </source>
</evidence>
<evidence type="ECO:0000303" key="8">
    <source>
    </source>
</evidence>
<evidence type="ECO:0000305" key="9"/>
<evidence type="ECO:0000305" key="10">
    <source>
    </source>
</evidence>
<evidence type="ECO:0000305" key="11">
    <source>
    </source>
</evidence>
<evidence type="ECO:0000305" key="12">
    <source>
    </source>
</evidence>
<evidence type="ECO:0007744" key="13">
    <source>
    </source>
</evidence>